<sequence length="236" mass="26978">MTRRYWNINLKEMIEAGVHFGHGIKKWNPKMAPYISAKRKGTHITNLARTTRFLSEACDLVFDAASQGKSFLIVGTKKRAADLVASAAIRARCHYVNKKWFSGMLTNWSITKTRLSQFRDLRAEEKMEKFHHLPKRDVAILKRKLSTLLRYLGGIKYMTRLPDIVIVLDQQKEYIALRECAILGIPTISLADTNCDPDLANISIPANDDTMTSIRLILNKLVFAICEGRSLYIRNH</sequence>
<comment type="subcellular location">
    <subcellularLocation>
        <location>Plastid</location>
        <location>Chloroplast</location>
    </subcellularLocation>
</comment>
<comment type="similarity">
    <text evidence="1">Belongs to the universal ribosomal protein uS2 family.</text>
</comment>
<protein>
    <recommendedName>
        <fullName evidence="1">Small ribosomal subunit protein uS2c</fullName>
    </recommendedName>
    <alternativeName>
        <fullName>30S ribosomal protein S2, chloroplastic</fullName>
    </alternativeName>
</protein>
<name>RR2_ORYNI</name>
<organism>
    <name type="scientific">Oryza nivara</name>
    <name type="common">Indian wild rice</name>
    <name type="synonym">Oryza sativa f. spontanea</name>
    <dbReference type="NCBI Taxonomy" id="4536"/>
    <lineage>
        <taxon>Eukaryota</taxon>
        <taxon>Viridiplantae</taxon>
        <taxon>Streptophyta</taxon>
        <taxon>Embryophyta</taxon>
        <taxon>Tracheophyta</taxon>
        <taxon>Spermatophyta</taxon>
        <taxon>Magnoliopsida</taxon>
        <taxon>Liliopsida</taxon>
        <taxon>Poales</taxon>
        <taxon>Poaceae</taxon>
        <taxon>BOP clade</taxon>
        <taxon>Oryzoideae</taxon>
        <taxon>Oryzeae</taxon>
        <taxon>Oryzinae</taxon>
        <taxon>Oryza</taxon>
    </lineage>
</organism>
<accession>Q6ENI1</accession>
<keyword id="KW-0150">Chloroplast</keyword>
<keyword id="KW-0934">Plastid</keyword>
<keyword id="KW-1185">Reference proteome</keyword>
<keyword id="KW-0687">Ribonucleoprotein</keyword>
<keyword id="KW-0689">Ribosomal protein</keyword>
<evidence type="ECO:0000305" key="1"/>
<evidence type="ECO:0000312" key="2">
    <source>
        <dbReference type="Proteomes" id="UP000006591"/>
    </source>
</evidence>
<dbReference type="EMBL" id="AP006728">
    <property type="protein sequence ID" value="BAD26771.1"/>
    <property type="molecule type" value="Genomic_DNA"/>
</dbReference>
<dbReference type="RefSeq" id="YP_052742.1">
    <property type="nucleotide sequence ID" value="NC_005973.1"/>
</dbReference>
<dbReference type="SMR" id="Q6ENI1"/>
<dbReference type="STRING" id="4536.Q6ENI1"/>
<dbReference type="GeneID" id="2885954"/>
<dbReference type="Proteomes" id="UP000006591">
    <property type="component" value="Chloroplast"/>
</dbReference>
<dbReference type="GO" id="GO:0009507">
    <property type="term" value="C:chloroplast"/>
    <property type="evidence" value="ECO:0007669"/>
    <property type="project" value="UniProtKB-SubCell"/>
</dbReference>
<dbReference type="GO" id="GO:0005763">
    <property type="term" value="C:mitochondrial small ribosomal subunit"/>
    <property type="evidence" value="ECO:0007669"/>
    <property type="project" value="TreeGrafter"/>
</dbReference>
<dbReference type="GO" id="GO:0009536">
    <property type="term" value="C:plastid"/>
    <property type="evidence" value="ECO:0000305"/>
    <property type="project" value="Gramene"/>
</dbReference>
<dbReference type="GO" id="GO:0003735">
    <property type="term" value="F:structural constituent of ribosome"/>
    <property type="evidence" value="ECO:0007669"/>
    <property type="project" value="InterPro"/>
</dbReference>
<dbReference type="GO" id="GO:0006412">
    <property type="term" value="P:translation"/>
    <property type="evidence" value="ECO:0007669"/>
    <property type="project" value="UniProtKB-UniRule"/>
</dbReference>
<dbReference type="CDD" id="cd01425">
    <property type="entry name" value="RPS2"/>
    <property type="match status" value="1"/>
</dbReference>
<dbReference type="FunFam" id="1.10.287.610:FF:000001">
    <property type="entry name" value="30S ribosomal protein S2"/>
    <property type="match status" value="1"/>
</dbReference>
<dbReference type="Gene3D" id="3.40.50.10490">
    <property type="entry name" value="Glucose-6-phosphate isomerase like protein, domain 1"/>
    <property type="match status" value="1"/>
</dbReference>
<dbReference type="Gene3D" id="1.10.287.610">
    <property type="entry name" value="Helix hairpin bin"/>
    <property type="match status" value="1"/>
</dbReference>
<dbReference type="HAMAP" id="MF_00291_B">
    <property type="entry name" value="Ribosomal_uS2_B"/>
    <property type="match status" value="1"/>
</dbReference>
<dbReference type="InterPro" id="IPR001865">
    <property type="entry name" value="Ribosomal_uS2"/>
</dbReference>
<dbReference type="InterPro" id="IPR005706">
    <property type="entry name" value="Ribosomal_uS2_bac/mit/plastid"/>
</dbReference>
<dbReference type="InterPro" id="IPR018130">
    <property type="entry name" value="Ribosomal_uS2_CS"/>
</dbReference>
<dbReference type="InterPro" id="IPR023591">
    <property type="entry name" value="Ribosomal_uS2_flav_dom_sf"/>
</dbReference>
<dbReference type="NCBIfam" id="TIGR01011">
    <property type="entry name" value="rpsB_bact"/>
    <property type="match status" value="1"/>
</dbReference>
<dbReference type="PANTHER" id="PTHR12534">
    <property type="entry name" value="30S RIBOSOMAL PROTEIN S2 PROKARYOTIC AND ORGANELLAR"/>
    <property type="match status" value="1"/>
</dbReference>
<dbReference type="PANTHER" id="PTHR12534:SF0">
    <property type="entry name" value="SMALL RIBOSOMAL SUBUNIT PROTEIN US2M"/>
    <property type="match status" value="1"/>
</dbReference>
<dbReference type="Pfam" id="PF00318">
    <property type="entry name" value="Ribosomal_S2"/>
    <property type="match status" value="1"/>
</dbReference>
<dbReference type="PRINTS" id="PR00395">
    <property type="entry name" value="RIBOSOMALS2"/>
</dbReference>
<dbReference type="SUPFAM" id="SSF52313">
    <property type="entry name" value="Ribosomal protein S2"/>
    <property type="match status" value="1"/>
</dbReference>
<dbReference type="PROSITE" id="PS00962">
    <property type="entry name" value="RIBOSOMAL_S2_1"/>
    <property type="match status" value="1"/>
</dbReference>
<dbReference type="PROSITE" id="PS00963">
    <property type="entry name" value="RIBOSOMAL_S2_2"/>
    <property type="match status" value="1"/>
</dbReference>
<reference key="1">
    <citation type="journal article" date="2004" name="Gene">
        <title>The complete nucleotide sequence of wild rice (Oryza nivara) chloroplast genome: first genome wide comparative sequence analysis of wild and cultivated rice.</title>
        <authorList>
            <person name="Masood M.S."/>
            <person name="Nishikawa T."/>
            <person name="Fukuoka S."/>
            <person name="Njenga P.K."/>
            <person name="Tsudzuki T."/>
            <person name="Kadowaki K."/>
        </authorList>
    </citation>
    <scope>NUCLEOTIDE SEQUENCE [LARGE SCALE GENOMIC DNA]</scope>
    <source>
        <strain evidence="2">cv. SL10</strain>
    </source>
</reference>
<proteinExistence type="inferred from homology"/>
<gene>
    <name type="primary">rps2</name>
</gene>
<geneLocation type="chloroplast"/>
<feature type="chain" id="PRO_0000134307" description="Small ribosomal subunit protein uS2c">
    <location>
        <begin position="1"/>
        <end position="236"/>
    </location>
</feature>